<sequence length="319" mass="36443">MKLSRISAINWNKISDDKDLEVWNRLTSNFWLPEKVPLSNDIPAWQTLTVVEQQLTMRVFTGLTLLDTLQNVIGAPSLMPDALTPHEEAVLSNISFMEAVHARSYSSIFSTLCQTKDVDAAYAWSEENAPLQRKAQIIQQHYRGDDPLKKKIASVFLESFLFYSGFWLPMYFSSRGKLTNTADLIRLIIRDEAVHGYYIGYKYQKNMEKISLGQREELKSFAFDLLLELYDNELQYTDELYAETPWADDVKAFLCYNANKALMNLGYEPLFPAEMAEVNPAILAALSPNADENHDFFSGSGSSYVMGKAVETEDEDWNF</sequence>
<name>RIR4_ECOLI</name>
<reference key="1">
    <citation type="journal article" date="1997" name="DNA Res.">
        <title>Construction of a contiguous 874-kb sequence of the Escherichia coli-K12 genome corresponding to 50.0-68.8 min on the linkage map and analysis of its sequence features.</title>
        <authorList>
            <person name="Yamamoto Y."/>
            <person name="Aiba H."/>
            <person name="Baba T."/>
            <person name="Hayashi K."/>
            <person name="Inada T."/>
            <person name="Isono K."/>
            <person name="Itoh T."/>
            <person name="Kimura S."/>
            <person name="Kitagawa M."/>
            <person name="Makino K."/>
            <person name="Miki T."/>
            <person name="Mitsuhashi N."/>
            <person name="Mizobuchi K."/>
            <person name="Mori H."/>
            <person name="Nakade S."/>
            <person name="Nakamura Y."/>
            <person name="Nashimoto H."/>
            <person name="Oshima T."/>
            <person name="Oyama S."/>
            <person name="Saito N."/>
            <person name="Sampei G."/>
            <person name="Satoh Y."/>
            <person name="Sivasundaram S."/>
            <person name="Tagami H."/>
            <person name="Takahashi H."/>
            <person name="Takeda J."/>
            <person name="Takemoto K."/>
            <person name="Uehara K."/>
            <person name="Wada C."/>
            <person name="Yamagata S."/>
            <person name="Horiuchi T."/>
        </authorList>
    </citation>
    <scope>NUCLEOTIDE SEQUENCE [LARGE SCALE GENOMIC DNA]</scope>
    <source>
        <strain>K12 / W3110 / ATCC 27325 / DSM 5911</strain>
    </source>
</reference>
<reference key="2">
    <citation type="journal article" date="1997" name="Science">
        <title>The complete genome sequence of Escherichia coli K-12.</title>
        <authorList>
            <person name="Blattner F.R."/>
            <person name="Plunkett G. III"/>
            <person name="Bloch C.A."/>
            <person name="Perna N.T."/>
            <person name="Burland V."/>
            <person name="Riley M."/>
            <person name="Collado-Vides J."/>
            <person name="Glasner J.D."/>
            <person name="Rode C.K."/>
            <person name="Mayhew G.F."/>
            <person name="Gregor J."/>
            <person name="Davis N.W."/>
            <person name="Kirkpatrick H.A."/>
            <person name="Goeden M.A."/>
            <person name="Rose D.J."/>
            <person name="Mau B."/>
            <person name="Shao Y."/>
        </authorList>
    </citation>
    <scope>NUCLEOTIDE SEQUENCE [LARGE SCALE GENOMIC DNA]</scope>
    <source>
        <strain>K12 / MG1655 / ATCC 47076</strain>
    </source>
</reference>
<reference key="3">
    <citation type="journal article" date="2006" name="Mol. Syst. Biol.">
        <title>Highly accurate genome sequences of Escherichia coli K-12 strains MG1655 and W3110.</title>
        <authorList>
            <person name="Hayashi K."/>
            <person name="Morooka N."/>
            <person name="Yamamoto Y."/>
            <person name="Fujita K."/>
            <person name="Isono K."/>
            <person name="Choi S."/>
            <person name="Ohtsubo E."/>
            <person name="Baba T."/>
            <person name="Wanner B.L."/>
            <person name="Mori H."/>
            <person name="Horiuchi T."/>
        </authorList>
    </citation>
    <scope>NUCLEOTIDE SEQUENCE [LARGE SCALE GENOMIC DNA]</scope>
    <source>
        <strain>K12 / W3110 / ATCC 27325 / DSM 5911</strain>
    </source>
</reference>
<reference key="4">
    <citation type="journal article" date="1989" name="J. Bacteriol.">
        <title>Nucleotide sequence of the osmoregulatory proU operon of Escherichia coli.</title>
        <authorList>
            <person name="Gowrishankar J."/>
        </authorList>
    </citation>
    <scope>NUCLEOTIDE SEQUENCE [GENOMIC DNA] OF 210-319</scope>
</reference>
<reference key="5">
    <citation type="journal article" date="1990" name="J. Bacteriol.">
        <authorList>
            <person name="Gowrishankar J."/>
        </authorList>
    </citation>
    <scope>ERRATUM OF PUBMED:2649479</scope>
</reference>
<reference key="6">
    <citation type="journal article" date="1994" name="J. Bacteriol.">
        <title>Cloning and sequencing of the genes from Salmonella typhimurium encoding a new bacterial ribonucleotide reductase.</title>
        <authorList>
            <person name="Jordan A."/>
            <person name="Gibert I."/>
            <person name="Barbe J."/>
        </authorList>
    </citation>
    <scope>IDENTIFICATION</scope>
</reference>
<reference key="7">
    <citation type="journal article" date="2009" name="Mol. Cell">
        <title>Hydroxyurea induces hydroxyl radical-mediated cell death in Escherichia coli.</title>
        <authorList>
            <person name="Davies B.W."/>
            <person name="Kohanski M.A."/>
            <person name="Simmons L.A."/>
            <person name="Winkler J.A."/>
            <person name="Collins J.J."/>
            <person name="Walker G.C."/>
        </authorList>
    </citation>
    <scope>INDUCTION BY HYDROXYUREA</scope>
    <source>
        <strain>K12 / MC4100 / ATCC 35695 / DSM 6574</strain>
    </source>
</reference>
<gene>
    <name type="primary">nrdF</name>
    <name type="synonym">ygaD</name>
    <name type="ordered locus">b2676</name>
    <name type="ordered locus">JW2651</name>
</gene>
<accession>P37146</accession>
<accession>P78244</accession>
<protein>
    <recommendedName>
        <fullName>Ribonucleoside-diphosphate reductase 2 subunit beta</fullName>
        <ecNumber>1.17.4.1</ecNumber>
    </recommendedName>
    <alternativeName>
        <fullName>R2F protein</fullName>
    </alternativeName>
    <alternativeName>
        <fullName>Ribonucleotide reductase 2</fullName>
    </alternativeName>
</protein>
<feature type="chain" id="PRO_0000190488" description="Ribonucleoside-diphosphate reductase 2 subunit beta">
    <location>
        <begin position="1"/>
        <end position="319"/>
    </location>
</feature>
<feature type="active site" evidence="2">
    <location>
        <position position="105"/>
    </location>
</feature>
<feature type="binding site" evidence="2">
    <location>
        <position position="67"/>
    </location>
    <ligand>
        <name>Fe cation</name>
        <dbReference type="ChEBI" id="CHEBI:24875"/>
        <label>1</label>
    </ligand>
</feature>
<feature type="binding site" evidence="2">
    <location>
        <position position="98"/>
    </location>
    <ligand>
        <name>Fe cation</name>
        <dbReference type="ChEBI" id="CHEBI:24875"/>
        <label>1</label>
    </ligand>
</feature>
<feature type="binding site" evidence="1">
    <location>
        <position position="98"/>
    </location>
    <ligand>
        <name>Fe cation</name>
        <dbReference type="ChEBI" id="CHEBI:24875"/>
        <label>2</label>
    </ligand>
</feature>
<feature type="binding site" evidence="2">
    <location>
        <position position="101"/>
    </location>
    <ligand>
        <name>Fe cation</name>
        <dbReference type="ChEBI" id="CHEBI:24875"/>
        <label>1</label>
    </ligand>
</feature>
<feature type="binding site" evidence="1">
    <location>
        <position position="158"/>
    </location>
    <ligand>
        <name>Fe cation</name>
        <dbReference type="ChEBI" id="CHEBI:24875"/>
        <label>2</label>
    </ligand>
</feature>
<feature type="binding site">
    <location>
        <position position="192"/>
    </location>
    <ligand>
        <name>Fe cation</name>
        <dbReference type="ChEBI" id="CHEBI:24875"/>
        <label>2</label>
    </ligand>
</feature>
<feature type="binding site">
    <location>
        <position position="195"/>
    </location>
    <ligand>
        <name>Fe cation</name>
        <dbReference type="ChEBI" id="CHEBI:24875"/>
        <label>2</label>
    </ligand>
</feature>
<feature type="helix" evidence="5">
    <location>
        <begin position="17"/>
        <end position="28"/>
    </location>
</feature>
<feature type="helix" evidence="5">
    <location>
        <begin position="33"/>
        <end position="35"/>
    </location>
</feature>
<feature type="helix" evidence="5">
    <location>
        <begin position="38"/>
        <end position="41"/>
    </location>
</feature>
<feature type="helix" evidence="5">
    <location>
        <begin position="42"/>
        <end position="45"/>
    </location>
</feature>
<feature type="helix" evidence="5">
    <location>
        <begin position="50"/>
        <end position="72"/>
    </location>
</feature>
<feature type="helix" evidence="5">
    <location>
        <begin position="74"/>
        <end position="78"/>
    </location>
</feature>
<feature type="helix" evidence="5">
    <location>
        <begin position="79"/>
        <end position="81"/>
    </location>
</feature>
<feature type="helix" evidence="5">
    <location>
        <begin position="85"/>
        <end position="112"/>
    </location>
</feature>
<feature type="helix" evidence="5">
    <location>
        <begin position="115"/>
        <end position="127"/>
    </location>
</feature>
<feature type="helix" evidence="5">
    <location>
        <begin position="129"/>
        <end position="143"/>
    </location>
</feature>
<feature type="helix" evidence="5">
    <location>
        <begin position="147"/>
        <end position="159"/>
    </location>
</feature>
<feature type="turn" evidence="5">
    <location>
        <begin position="160"/>
        <end position="162"/>
    </location>
</feature>
<feature type="helix" evidence="5">
    <location>
        <begin position="163"/>
        <end position="174"/>
    </location>
</feature>
<feature type="helix" evidence="5">
    <location>
        <begin position="179"/>
        <end position="207"/>
    </location>
</feature>
<feature type="helix" evidence="5">
    <location>
        <begin position="212"/>
        <end position="240"/>
    </location>
</feature>
<feature type="turn" evidence="6">
    <location>
        <begin position="241"/>
        <end position="243"/>
    </location>
</feature>
<feature type="helix" evidence="5">
    <location>
        <begin position="247"/>
        <end position="264"/>
    </location>
</feature>
<feature type="helix" evidence="5">
    <location>
        <begin position="273"/>
        <end position="275"/>
    </location>
</feature>
<feature type="helix" evidence="5">
    <location>
        <begin position="280"/>
        <end position="286"/>
    </location>
</feature>
<dbReference type="EC" id="1.17.4.1"/>
<dbReference type="EMBL" id="U00096">
    <property type="protein sequence ID" value="AAC75723.1"/>
    <property type="molecule type" value="Genomic_DNA"/>
</dbReference>
<dbReference type="EMBL" id="AP009048">
    <property type="protein sequence ID" value="BAA16541.1"/>
    <property type="molecule type" value="Genomic_DNA"/>
</dbReference>
<dbReference type="EMBL" id="M24856">
    <property type="status" value="NOT_ANNOTATED_CDS"/>
    <property type="molecule type" value="Genomic_DNA"/>
</dbReference>
<dbReference type="PIR" id="E65047">
    <property type="entry name" value="E65047"/>
</dbReference>
<dbReference type="RefSeq" id="NP_417162.1">
    <property type="nucleotide sequence ID" value="NC_000913.3"/>
</dbReference>
<dbReference type="RefSeq" id="WP_000777969.1">
    <property type="nucleotide sequence ID" value="NZ_LN832404.1"/>
</dbReference>
<dbReference type="PDB" id="3N37">
    <property type="method" value="X-ray"/>
    <property type="resolution" value="1.65 A"/>
    <property type="chains" value="A=1-319"/>
</dbReference>
<dbReference type="PDB" id="3N38">
    <property type="method" value="X-ray"/>
    <property type="resolution" value="1.90 A"/>
    <property type="chains" value="A=1-319"/>
</dbReference>
<dbReference type="PDB" id="3N39">
    <property type="method" value="X-ray"/>
    <property type="resolution" value="2.50 A"/>
    <property type="chains" value="A/B=1-319"/>
</dbReference>
<dbReference type="PDB" id="3N3A">
    <property type="method" value="X-ray"/>
    <property type="resolution" value="1.99 A"/>
    <property type="chains" value="A/B=1-319"/>
</dbReference>
<dbReference type="PDB" id="3N3B">
    <property type="method" value="X-ray"/>
    <property type="resolution" value="2.36 A"/>
    <property type="chains" value="A/B=1-319"/>
</dbReference>
<dbReference type="PDB" id="4M1F">
    <property type="method" value="X-ray"/>
    <property type="resolution" value="2.00 A"/>
    <property type="chains" value="A=1-319"/>
</dbReference>
<dbReference type="PDBsum" id="3N37"/>
<dbReference type="PDBsum" id="3N38"/>
<dbReference type="PDBsum" id="3N39"/>
<dbReference type="PDBsum" id="3N3A"/>
<dbReference type="PDBsum" id="3N3B"/>
<dbReference type="PDBsum" id="4M1F"/>
<dbReference type="SMR" id="P37146"/>
<dbReference type="BioGRID" id="4262269">
    <property type="interactions" value="143"/>
</dbReference>
<dbReference type="BioGRID" id="851481">
    <property type="interactions" value="3"/>
</dbReference>
<dbReference type="ComplexPortal" id="CPX-5157">
    <property type="entry name" value="Ribonucleoside-diphosphate reductase 2 complex"/>
</dbReference>
<dbReference type="FunCoup" id="P37146">
    <property type="interactions" value="144"/>
</dbReference>
<dbReference type="IntAct" id="P37146">
    <property type="interactions" value="10"/>
</dbReference>
<dbReference type="STRING" id="511145.b2676"/>
<dbReference type="PaxDb" id="511145-b2676"/>
<dbReference type="EnsemblBacteria" id="AAC75723">
    <property type="protein sequence ID" value="AAC75723"/>
    <property type="gene ID" value="b2676"/>
</dbReference>
<dbReference type="GeneID" id="93779334"/>
<dbReference type="GeneID" id="947149"/>
<dbReference type="KEGG" id="ecj:JW2651"/>
<dbReference type="KEGG" id="eco:b2676"/>
<dbReference type="KEGG" id="ecoc:C3026_14745"/>
<dbReference type="PATRIC" id="fig|1411691.4.peg.4065"/>
<dbReference type="EchoBASE" id="EB2283"/>
<dbReference type="eggNOG" id="COG0208">
    <property type="taxonomic scope" value="Bacteria"/>
</dbReference>
<dbReference type="HOGENOM" id="CLU_052495_0_0_6"/>
<dbReference type="InParanoid" id="P37146"/>
<dbReference type="OMA" id="LGYEAMF"/>
<dbReference type="OrthoDB" id="9766544at2"/>
<dbReference type="PhylomeDB" id="P37146"/>
<dbReference type="BioCyc" id="EcoCyc:NRDF-MONOMER"/>
<dbReference type="BioCyc" id="MetaCyc:NRDF-MONOMER"/>
<dbReference type="BRENDA" id="1.17.4.1">
    <property type="organism ID" value="2026"/>
</dbReference>
<dbReference type="EvolutionaryTrace" id="P37146"/>
<dbReference type="PRO" id="PR:P37146"/>
<dbReference type="Proteomes" id="UP000000625">
    <property type="component" value="Chromosome"/>
</dbReference>
<dbReference type="GO" id="GO:0005971">
    <property type="term" value="C:ribonucleoside-diphosphate reductase complex"/>
    <property type="evidence" value="ECO:0000316"/>
    <property type="project" value="EcoliWiki"/>
</dbReference>
<dbReference type="GO" id="GO:0030145">
    <property type="term" value="F:manganese ion binding"/>
    <property type="evidence" value="ECO:0000314"/>
    <property type="project" value="EcoCyc"/>
</dbReference>
<dbReference type="GO" id="GO:0004748">
    <property type="term" value="F:ribonucleoside-diphosphate reductase activity, thioredoxin disulfide as acceptor"/>
    <property type="evidence" value="ECO:0007669"/>
    <property type="project" value="UniProtKB-EC"/>
</dbReference>
<dbReference type="GO" id="GO:0009265">
    <property type="term" value="P:2'-deoxyribonucleotide biosynthetic process"/>
    <property type="evidence" value="ECO:0000250"/>
    <property type="project" value="ComplexPortal"/>
</dbReference>
<dbReference type="GO" id="GO:0009263">
    <property type="term" value="P:deoxyribonucleotide biosynthetic process"/>
    <property type="evidence" value="ECO:0000316"/>
    <property type="project" value="EcoliWiki"/>
</dbReference>
<dbReference type="GO" id="GO:0009185">
    <property type="term" value="P:ribonucleoside diphosphate metabolic process"/>
    <property type="evidence" value="ECO:0000250"/>
    <property type="project" value="ComplexPortal"/>
</dbReference>
<dbReference type="CDD" id="cd01049">
    <property type="entry name" value="RNRR2"/>
    <property type="match status" value="1"/>
</dbReference>
<dbReference type="FunFam" id="1.10.620.20:FF:000005">
    <property type="entry name" value="Ribonucleoside-diphosphate reductase subunit beta"/>
    <property type="match status" value="1"/>
</dbReference>
<dbReference type="Gene3D" id="1.10.620.20">
    <property type="entry name" value="Ribonucleotide Reductase, subunit A"/>
    <property type="match status" value="1"/>
</dbReference>
<dbReference type="InterPro" id="IPR009078">
    <property type="entry name" value="Ferritin-like_SF"/>
</dbReference>
<dbReference type="InterPro" id="IPR012348">
    <property type="entry name" value="RNR-like"/>
</dbReference>
<dbReference type="InterPro" id="IPR026494">
    <property type="entry name" value="RNR_NrdF-like"/>
</dbReference>
<dbReference type="InterPro" id="IPR033909">
    <property type="entry name" value="RNR_small"/>
</dbReference>
<dbReference type="InterPro" id="IPR030475">
    <property type="entry name" value="RNR_small_AS"/>
</dbReference>
<dbReference type="InterPro" id="IPR000358">
    <property type="entry name" value="RNR_small_fam"/>
</dbReference>
<dbReference type="NCBIfam" id="NF007182">
    <property type="entry name" value="PRK09614.1-1"/>
    <property type="match status" value="1"/>
</dbReference>
<dbReference type="NCBIfam" id="NF007183">
    <property type="entry name" value="PRK09614.1-2"/>
    <property type="match status" value="1"/>
</dbReference>
<dbReference type="NCBIfam" id="NF010572">
    <property type="entry name" value="PRK13965.1"/>
    <property type="match status" value="1"/>
</dbReference>
<dbReference type="NCBIfam" id="TIGR04171">
    <property type="entry name" value="RNR_1b_NrdF"/>
    <property type="match status" value="1"/>
</dbReference>
<dbReference type="PANTHER" id="PTHR23409">
    <property type="entry name" value="RIBONUCLEOSIDE-DIPHOSPHATE REDUCTASE SMALL CHAIN"/>
    <property type="match status" value="1"/>
</dbReference>
<dbReference type="PANTHER" id="PTHR23409:SF18">
    <property type="entry name" value="RIBONUCLEOSIDE-DIPHOSPHATE REDUCTASE SUBUNIT M2"/>
    <property type="match status" value="1"/>
</dbReference>
<dbReference type="Pfam" id="PF00268">
    <property type="entry name" value="Ribonuc_red_sm"/>
    <property type="match status" value="1"/>
</dbReference>
<dbReference type="PIRSF" id="PIRSF000355">
    <property type="entry name" value="NrdB"/>
    <property type="match status" value="1"/>
</dbReference>
<dbReference type="SUPFAM" id="SSF47240">
    <property type="entry name" value="Ferritin-like"/>
    <property type="match status" value="1"/>
</dbReference>
<dbReference type="PROSITE" id="PS00368">
    <property type="entry name" value="RIBORED_SMALL"/>
    <property type="match status" value="1"/>
</dbReference>
<evidence type="ECO:0000250" key="1"/>
<evidence type="ECO:0000255" key="2">
    <source>
        <dbReference type="PROSITE-ProRule" id="PRU10014"/>
    </source>
</evidence>
<evidence type="ECO:0000269" key="3">
    <source>
    </source>
</evidence>
<evidence type="ECO:0000305" key="4"/>
<evidence type="ECO:0007829" key="5">
    <source>
        <dbReference type="PDB" id="3N37"/>
    </source>
</evidence>
<evidence type="ECO:0007829" key="6">
    <source>
        <dbReference type="PDB" id="3N3B"/>
    </source>
</evidence>
<proteinExistence type="evidence at protein level"/>
<comment type="function">
    <text>Provides the precursors necessary for DNA synthesis. Catalyzes the biosynthesis of deoxyribonucleotides from the corresponding ribonucleotides. R2F contains the tyrosyl radical required for catalysis.</text>
</comment>
<comment type="catalytic activity">
    <reaction evidence="2">
        <text>a 2'-deoxyribonucleoside 5'-diphosphate + [thioredoxin]-disulfide + H2O = a ribonucleoside 5'-diphosphate + [thioredoxin]-dithiol</text>
        <dbReference type="Rhea" id="RHEA:23252"/>
        <dbReference type="Rhea" id="RHEA-COMP:10698"/>
        <dbReference type="Rhea" id="RHEA-COMP:10700"/>
        <dbReference type="ChEBI" id="CHEBI:15377"/>
        <dbReference type="ChEBI" id="CHEBI:29950"/>
        <dbReference type="ChEBI" id="CHEBI:50058"/>
        <dbReference type="ChEBI" id="CHEBI:57930"/>
        <dbReference type="ChEBI" id="CHEBI:73316"/>
        <dbReference type="EC" id="1.17.4.1"/>
    </reaction>
</comment>
<comment type="cofactor">
    <cofactor evidence="1">
        <name>Fe cation</name>
        <dbReference type="ChEBI" id="CHEBI:24875"/>
    </cofactor>
    <text evidence="1">Binds 2 iron ions per subunit.</text>
</comment>
<comment type="subunit">
    <text evidence="1">Tetramer of two alpha and two beta subunits.</text>
</comment>
<comment type="induction">
    <text evidence="3">Induced 2-fold by hydroxyurea.</text>
</comment>
<comment type="similarity">
    <text evidence="4">Belongs to the ribonucleoside diphosphate reductase small chain family.</text>
</comment>
<keyword id="KW-0002">3D-structure</keyword>
<keyword id="KW-0215">Deoxyribonucleotide synthesis</keyword>
<keyword id="KW-0408">Iron</keyword>
<keyword id="KW-0479">Metal-binding</keyword>
<keyword id="KW-0560">Oxidoreductase</keyword>
<keyword id="KW-1185">Reference proteome</keyword>
<organism>
    <name type="scientific">Escherichia coli (strain K12)</name>
    <dbReference type="NCBI Taxonomy" id="83333"/>
    <lineage>
        <taxon>Bacteria</taxon>
        <taxon>Pseudomonadati</taxon>
        <taxon>Pseudomonadota</taxon>
        <taxon>Gammaproteobacteria</taxon>
        <taxon>Enterobacterales</taxon>
        <taxon>Enterobacteriaceae</taxon>
        <taxon>Escherichia</taxon>
    </lineage>
</organism>